<protein>
    <recommendedName>
        <fullName evidence="1">Segregation and condensation protein A</fullName>
    </recommendedName>
</protein>
<sequence length="247" mass="29305">MQYNFKVEAFEGPLDLLLHLIHRYEIDIYNIPVAEITEQYLSYVHTMKELQLDVASEYLVMAATLLQIKSKMLLPKHEEDVLDNGDDFIDDPRQELMERLIEYKKYKQVATELKEREQERAQLYTRPPIDFTSLQQEEETSLPLDVTLYDMLAAFQKLMRRKKAKKPVTTRITRQEIPIEQRMTDILKQLEIQGGRQSFYDLFVDDEREIMVVTFLAVLELMKNQQIVIEQEHNFDEIFVSSYTKSA</sequence>
<evidence type="ECO:0000255" key="1">
    <source>
        <dbReference type="HAMAP-Rule" id="MF_01805"/>
    </source>
</evidence>
<feature type="chain" id="PRO_0000211076" description="Segregation and condensation protein A">
    <location>
        <begin position="1"/>
        <end position="247"/>
    </location>
</feature>
<reference key="1">
    <citation type="journal article" date="2004" name="Nucleic Acids Res.">
        <title>The genome sequence of Bacillus cereus ATCC 10987 reveals metabolic adaptations and a large plasmid related to Bacillus anthracis pXO1.</title>
        <authorList>
            <person name="Rasko D.A."/>
            <person name="Ravel J."/>
            <person name="Oekstad O.A."/>
            <person name="Helgason E."/>
            <person name="Cer R.Z."/>
            <person name="Jiang L."/>
            <person name="Shores K.A."/>
            <person name="Fouts D.E."/>
            <person name="Tourasse N.J."/>
            <person name="Angiuoli S.V."/>
            <person name="Kolonay J.F."/>
            <person name="Nelson W.C."/>
            <person name="Kolstoe A.-B."/>
            <person name="Fraser C.M."/>
            <person name="Read T.D."/>
        </authorList>
    </citation>
    <scope>NUCLEOTIDE SEQUENCE [LARGE SCALE GENOMIC DNA]</scope>
    <source>
        <strain>ATCC 10987 / NRS 248</strain>
    </source>
</reference>
<comment type="function">
    <text evidence="1">Participates in chromosomal partition during cell division. May act via the formation of a condensin-like complex containing Smc and ScpB that pull DNA away from mid-cell into both cell halves.</text>
</comment>
<comment type="subunit">
    <text evidence="1">Component of a cohesin-like complex composed of ScpA, ScpB and the Smc homodimer, in which ScpA and ScpB bind to the head domain of Smc. The presence of the three proteins is required for the association of the complex with DNA.</text>
</comment>
<comment type="subcellular location">
    <subcellularLocation>
        <location evidence="1">Cytoplasm</location>
    </subcellularLocation>
    <text evidence="1">Associated with two foci at the outer edges of the nucleoid region in young cells, and at four foci within both cell halves in older cells.</text>
</comment>
<comment type="similarity">
    <text evidence="1">Belongs to the ScpA family.</text>
</comment>
<keyword id="KW-0131">Cell cycle</keyword>
<keyword id="KW-0132">Cell division</keyword>
<keyword id="KW-0159">Chromosome partition</keyword>
<keyword id="KW-0963">Cytoplasm</keyword>
<proteinExistence type="inferred from homology"/>
<name>SCPA_BACC1</name>
<dbReference type="EMBL" id="AE017194">
    <property type="protein sequence ID" value="AAS43027.1"/>
    <property type="molecule type" value="Genomic_DNA"/>
</dbReference>
<dbReference type="SMR" id="Q731P0"/>
<dbReference type="DNASU" id="2750043"/>
<dbReference type="KEGG" id="bca:BCE_4125"/>
<dbReference type="HOGENOM" id="CLU_038686_3_1_9"/>
<dbReference type="Proteomes" id="UP000002527">
    <property type="component" value="Chromosome"/>
</dbReference>
<dbReference type="GO" id="GO:0005737">
    <property type="term" value="C:cytoplasm"/>
    <property type="evidence" value="ECO:0007669"/>
    <property type="project" value="UniProtKB-SubCell"/>
</dbReference>
<dbReference type="GO" id="GO:0051301">
    <property type="term" value="P:cell division"/>
    <property type="evidence" value="ECO:0007669"/>
    <property type="project" value="UniProtKB-KW"/>
</dbReference>
<dbReference type="GO" id="GO:0007059">
    <property type="term" value="P:chromosome segregation"/>
    <property type="evidence" value="ECO:0007669"/>
    <property type="project" value="UniProtKB-UniRule"/>
</dbReference>
<dbReference type="GO" id="GO:0006260">
    <property type="term" value="P:DNA replication"/>
    <property type="evidence" value="ECO:0007669"/>
    <property type="project" value="UniProtKB-UniRule"/>
</dbReference>
<dbReference type="Gene3D" id="6.10.250.2410">
    <property type="match status" value="1"/>
</dbReference>
<dbReference type="Gene3D" id="1.10.10.580">
    <property type="entry name" value="Structural maintenance of chromosome 1. Chain E"/>
    <property type="match status" value="1"/>
</dbReference>
<dbReference type="HAMAP" id="MF_01805">
    <property type="entry name" value="ScpA"/>
    <property type="match status" value="1"/>
</dbReference>
<dbReference type="InterPro" id="IPR003768">
    <property type="entry name" value="ScpA"/>
</dbReference>
<dbReference type="InterPro" id="IPR023093">
    <property type="entry name" value="ScpA-like_C"/>
</dbReference>
<dbReference type="NCBIfam" id="NF000992">
    <property type="entry name" value="PRK00104.1-1"/>
    <property type="match status" value="1"/>
</dbReference>
<dbReference type="NCBIfam" id="NF000995">
    <property type="entry name" value="PRK00104.1-4"/>
    <property type="match status" value="1"/>
</dbReference>
<dbReference type="PANTHER" id="PTHR33969">
    <property type="entry name" value="SEGREGATION AND CONDENSATION PROTEIN A"/>
    <property type="match status" value="1"/>
</dbReference>
<dbReference type="PANTHER" id="PTHR33969:SF2">
    <property type="entry name" value="SEGREGATION AND CONDENSATION PROTEIN A"/>
    <property type="match status" value="1"/>
</dbReference>
<dbReference type="Pfam" id="PF02616">
    <property type="entry name" value="SMC_ScpA"/>
    <property type="match status" value="1"/>
</dbReference>
<accession>Q731P0</accession>
<organism>
    <name type="scientific">Bacillus cereus (strain ATCC 10987 / NRS 248)</name>
    <dbReference type="NCBI Taxonomy" id="222523"/>
    <lineage>
        <taxon>Bacteria</taxon>
        <taxon>Bacillati</taxon>
        <taxon>Bacillota</taxon>
        <taxon>Bacilli</taxon>
        <taxon>Bacillales</taxon>
        <taxon>Bacillaceae</taxon>
        <taxon>Bacillus</taxon>
        <taxon>Bacillus cereus group</taxon>
    </lineage>
</organism>
<gene>
    <name evidence="1" type="primary">scpA</name>
    <name type="ordered locus">BCE_4125</name>
</gene>